<reference key="1">
    <citation type="journal article" date="2002" name="J. Gen. Virol.">
        <title>The sequence of camelpox virus shows it is most closely related to variola virus, the cause of smallpox.</title>
        <authorList>
            <person name="Gubser C."/>
            <person name="Smith G.L."/>
        </authorList>
    </citation>
    <scope>NUCLEOTIDE SEQUENCE [LARGE SCALE GENOMIC DNA]</scope>
</reference>
<comment type="function">
    <text evidence="2">Inhibits host immune defense by binding to host TNF and various chemokines in the extracellular space. Binds host CC chemokines (beta chemokines) and CXC chemokines (alpha chemokines).</text>
</comment>
<comment type="subcellular location">
    <subcellularLocation>
        <location evidence="1">Secreted</location>
    </subcellularLocation>
</comment>
<comment type="induction">
    <text evidence="3">Expressed in the early phase of the viral replicative cycle.</text>
</comment>
<comment type="similarity">
    <text evidence="6">Belongs to the orthopoxvirus OPG002 family.</text>
</comment>
<proteinExistence type="inferred from homology"/>
<organism>
    <name type="scientific">Camelpox virus (strain CMS)</name>
    <dbReference type="NCBI Taxonomy" id="203172"/>
    <lineage>
        <taxon>Viruses</taxon>
        <taxon>Varidnaviria</taxon>
        <taxon>Bamfordvirae</taxon>
        <taxon>Nucleocytoviricota</taxon>
        <taxon>Pokkesviricetes</taxon>
        <taxon>Chitovirales</taxon>
        <taxon>Poxviridae</taxon>
        <taxon>Chordopoxvirinae</taxon>
        <taxon>Orthopoxvirus</taxon>
        <taxon>Camelpox virus</taxon>
    </lineage>
</organism>
<name>CRMB_CAMPS</name>
<sequence>MKSVLYSYILFLSCIIINGRDVTPYAPSNGKCKDNEYKRHNLCCLSCPPGTYASRLCDSKTNTQCTPCGSGTFTSRNNHLPACLSCNGRCDSNQVETRSCNTTHNRICECSPGYYCILKGSSGCKACVSQTKCGIGYGVSGHTSAGDVICSPCGLGTYSRTVSSADKCEPVPSNTFNYIDVEINLYPVNDTSCTRTTTTGISESISTSELTITMNHKDCDPVFREEYFSVLNKVATSGFFTGENRYQNISKVCTLNFEIKCNNKGSSSKQLTKAKNDDGIMPHSETVTLVGDCLSSVDIYILYSNTNTQDYETDTISYHAGNVLDVDSHMPGSCDIHKLITNSKPTHFL</sequence>
<evidence type="ECO:0000250" key="1">
    <source>
        <dbReference type="UniProtKB" id="O73559"/>
    </source>
</evidence>
<evidence type="ECO:0000250" key="2">
    <source>
        <dbReference type="UniProtKB" id="P0DSV7"/>
    </source>
</evidence>
<evidence type="ECO:0000250" key="3">
    <source>
        <dbReference type="UniProtKB" id="Q76ZJ3"/>
    </source>
</evidence>
<evidence type="ECO:0000255" key="4"/>
<evidence type="ECO:0000255" key="5">
    <source>
        <dbReference type="PROSITE-ProRule" id="PRU00206"/>
    </source>
</evidence>
<evidence type="ECO:0000305" key="6"/>
<keyword id="KW-1015">Disulfide bond</keyword>
<keyword id="KW-0325">Glycoprotein</keyword>
<keyword id="KW-0675">Receptor</keyword>
<keyword id="KW-1185">Reference proteome</keyword>
<keyword id="KW-0677">Repeat</keyword>
<keyword id="KW-0964">Secreted</keyword>
<keyword id="KW-0732">Signal</keyword>
<organismHost>
    <name type="scientific">Camelus</name>
    <dbReference type="NCBI Taxonomy" id="9836"/>
</organismHost>
<dbReference type="EMBL" id="AY009089">
    <property type="protein sequence ID" value="AAG37456.1"/>
    <property type="molecule type" value="Genomic_DNA"/>
</dbReference>
<dbReference type="EMBL" id="AY009089">
    <property type="protein sequence ID" value="AAG37718.1"/>
    <property type="molecule type" value="Genomic_DNA"/>
</dbReference>
<dbReference type="SMR" id="P68637"/>
<dbReference type="GlyCosmos" id="P68637">
    <property type="glycosylation" value="3 sites, No reported glycans"/>
</dbReference>
<dbReference type="Proteomes" id="UP000107153">
    <property type="component" value="Genome"/>
</dbReference>
<dbReference type="GO" id="GO:0005576">
    <property type="term" value="C:extracellular region"/>
    <property type="evidence" value="ECO:0007669"/>
    <property type="project" value="UniProtKB-SubCell"/>
</dbReference>
<dbReference type="GO" id="GO:0043120">
    <property type="term" value="F:tumor necrosis factor binding"/>
    <property type="evidence" value="ECO:0007669"/>
    <property type="project" value="TreeGrafter"/>
</dbReference>
<dbReference type="GO" id="GO:0005031">
    <property type="term" value="F:tumor necrosis factor receptor activity"/>
    <property type="evidence" value="ECO:0007669"/>
    <property type="project" value="InterPro"/>
</dbReference>
<dbReference type="GO" id="GO:0051044">
    <property type="term" value="P:positive regulation of membrane protein ectodomain proteolysis"/>
    <property type="evidence" value="ECO:0007669"/>
    <property type="project" value="TreeGrafter"/>
</dbReference>
<dbReference type="GO" id="GO:0042129">
    <property type="term" value="P:regulation of T cell proliferation"/>
    <property type="evidence" value="ECO:0007669"/>
    <property type="project" value="TreeGrafter"/>
</dbReference>
<dbReference type="GO" id="GO:0052031">
    <property type="term" value="P:symbiont-mediated perturbation of host defense response"/>
    <property type="evidence" value="ECO:0007669"/>
    <property type="project" value="InterPro"/>
</dbReference>
<dbReference type="CDD" id="cd15839">
    <property type="entry name" value="TNFRSF_viral"/>
    <property type="match status" value="1"/>
</dbReference>
<dbReference type="Gene3D" id="2.60.240.20">
    <property type="match status" value="1"/>
</dbReference>
<dbReference type="Gene3D" id="2.10.50.10">
    <property type="entry name" value="Tumor Necrosis Factor Receptor, subunit A, domain 2"/>
    <property type="match status" value="2"/>
</dbReference>
<dbReference type="InterPro" id="IPR010806">
    <property type="entry name" value="Poxvirus_TNF-rcpt-II_C"/>
</dbReference>
<dbReference type="InterPro" id="IPR011172">
    <property type="entry name" value="Poxvirus_TNF_rcpt-II"/>
</dbReference>
<dbReference type="InterPro" id="IPR051670">
    <property type="entry name" value="TNF_chemokine_rcpt-like"/>
</dbReference>
<dbReference type="InterPro" id="IPR001368">
    <property type="entry name" value="TNFR/NGFR_Cys_rich_reg"/>
</dbReference>
<dbReference type="InterPro" id="IPR034059">
    <property type="entry name" value="TNFRSF_N_viral"/>
</dbReference>
<dbReference type="PANTHER" id="PTHR47386">
    <property type="entry name" value="TUMOR NECROSIS FACTOR RECEPTOR SUPERFAMILY MEMBER 1B"/>
    <property type="match status" value="1"/>
</dbReference>
<dbReference type="PANTHER" id="PTHR47386:SF1">
    <property type="entry name" value="TUMOR NECROSIS FACTOR RECEPTOR SUPERFAMILY MEMBER 1B"/>
    <property type="match status" value="1"/>
</dbReference>
<dbReference type="Pfam" id="PF07190">
    <property type="entry name" value="CrmD_SECRET"/>
    <property type="match status" value="1"/>
</dbReference>
<dbReference type="Pfam" id="PF00020">
    <property type="entry name" value="TNFR_c6"/>
    <property type="match status" value="1"/>
</dbReference>
<dbReference type="PIRSF" id="PIRSF001790">
    <property type="entry name" value="TNF_C22L"/>
    <property type="match status" value="1"/>
</dbReference>
<dbReference type="SMART" id="SM00208">
    <property type="entry name" value="TNFR"/>
    <property type="match status" value="3"/>
</dbReference>
<dbReference type="SUPFAM" id="SSF57586">
    <property type="entry name" value="TNF receptor-like"/>
    <property type="match status" value="2"/>
</dbReference>
<dbReference type="PROSITE" id="PS00652">
    <property type="entry name" value="TNFR_NGFR_1"/>
    <property type="match status" value="2"/>
</dbReference>
<dbReference type="PROSITE" id="PS50050">
    <property type="entry name" value="TNFR_NGFR_2"/>
    <property type="match status" value="2"/>
</dbReference>
<accession>P68637</accession>
<accession>Q8UYA7</accession>
<gene>
    <name type="primary">OPG002</name>
    <name type="synonym">CRMB1</name>
    <name type="ordered locus">CMP2L</name>
</gene>
<gene>
    <name type="primary">CRMB2</name>
    <name type="ordered locus">CMP205R</name>
</gene>
<feature type="signal peptide" evidence="4">
    <location>
        <begin position="1"/>
        <end position="19"/>
    </location>
</feature>
<feature type="chain" id="PRO_0000034617" description="Soluble TNF receptor II">
    <location>
        <begin position="20"/>
        <end position="349"/>
    </location>
</feature>
<feature type="repeat" description="TNFR-Cys 1">
    <location>
        <begin position="31"/>
        <end position="65"/>
    </location>
</feature>
<feature type="repeat" description="TNFR-Cys 2">
    <location>
        <begin position="67"/>
        <end position="108"/>
    </location>
</feature>
<feature type="glycosylation site" description="N-linked (GlcNAc...) asparagine; by host" evidence="4">
    <location>
        <position position="101"/>
    </location>
</feature>
<feature type="glycosylation site" description="N-linked (GlcNAc...) asparagine; by host" evidence="4">
    <location>
        <position position="189"/>
    </location>
</feature>
<feature type="glycosylation site" description="N-linked (GlcNAc...) asparagine; by host" evidence="4">
    <location>
        <position position="248"/>
    </location>
</feature>
<feature type="disulfide bond" evidence="5">
    <location>
        <begin position="32"/>
        <end position="43"/>
    </location>
</feature>
<feature type="disulfide bond" evidence="5">
    <location>
        <begin position="44"/>
        <end position="57"/>
    </location>
</feature>
<feature type="disulfide bond" evidence="5">
    <location>
        <begin position="47"/>
        <end position="65"/>
    </location>
</feature>
<feature type="disulfide bond" evidence="5">
    <location>
        <begin position="68"/>
        <end position="83"/>
    </location>
</feature>
<feature type="disulfide bond" evidence="5">
    <location>
        <begin position="86"/>
        <end position="100"/>
    </location>
</feature>
<feature type="disulfide bond" evidence="5">
    <location>
        <begin position="90"/>
        <end position="108"/>
    </location>
</feature>
<protein>
    <recommendedName>
        <fullName>Soluble TNF receptor II</fullName>
    </recommendedName>
    <alternativeName>
        <fullName>Cytokine response-modifying protein B</fullName>
    </alternativeName>
</protein>